<gene>
    <name evidence="2" type="primary">rpsL</name>
    <name type="ordered locus">DICTH_0832</name>
</gene>
<keyword id="KW-0488">Methylation</keyword>
<keyword id="KW-0687">Ribonucleoprotein</keyword>
<keyword id="KW-0689">Ribosomal protein</keyword>
<keyword id="KW-0694">RNA-binding</keyword>
<keyword id="KW-0699">rRNA-binding</keyword>
<keyword id="KW-0820">tRNA-binding</keyword>
<sequence length="128" mass="14169">MPTINQLIRKGREPKERKSKSPALMGNPQKRGVCIRVTTMTPKKPNSALRKVARVRLTNGVEVWAYIPGIGHNLQEHSVVLVRGGRVKDLPGVRYHIIRGALDAAGVEGRKQGRSKYGTKRPKEGGKK</sequence>
<comment type="function">
    <text evidence="2">With S4 and S5 plays an important role in translational accuracy.</text>
</comment>
<comment type="function">
    <text evidence="2">Interacts with and stabilizes bases of the 16S rRNA that are involved in tRNA selection in the A site and with the mRNA backbone. Located at the interface of the 30S and 50S subunits, it traverses the body of the 30S subunit contacting proteins on the other side and probably holding the rRNA structure together. The combined cluster of proteins S8, S12 and S17 appears to hold together the shoulder and platform of the 30S subunit.</text>
</comment>
<comment type="subunit">
    <text evidence="2">Part of the 30S ribosomal subunit. Contacts proteins S8 and S17. May interact with IF1 in the 30S initiation complex.</text>
</comment>
<comment type="similarity">
    <text evidence="2">Belongs to the universal ribosomal protein uS12 family.</text>
</comment>
<reference key="1">
    <citation type="journal article" date="2014" name="Genome Announc.">
        <title>Complete Genome Sequence of the Extreme Thermophile Dictyoglomus thermophilum H-6-12.</title>
        <authorList>
            <person name="Coil D.A."/>
            <person name="Badger J.H."/>
            <person name="Forberger H.C."/>
            <person name="Riggs F."/>
            <person name="Madupu R."/>
            <person name="Fedorova N."/>
            <person name="Ward N."/>
            <person name="Robb F.T."/>
            <person name="Eisen J.A."/>
        </authorList>
    </citation>
    <scope>NUCLEOTIDE SEQUENCE [LARGE SCALE GENOMIC DNA]</scope>
    <source>
        <strain>ATCC 35947 / DSM 3960 / H-6-12</strain>
    </source>
</reference>
<organism>
    <name type="scientific">Dictyoglomus thermophilum (strain ATCC 35947 / DSM 3960 / H-6-12)</name>
    <dbReference type="NCBI Taxonomy" id="309799"/>
    <lineage>
        <taxon>Bacteria</taxon>
        <taxon>Pseudomonadati</taxon>
        <taxon>Dictyoglomota</taxon>
        <taxon>Dictyoglomia</taxon>
        <taxon>Dictyoglomales</taxon>
        <taxon>Dictyoglomaceae</taxon>
        <taxon>Dictyoglomus</taxon>
    </lineage>
</organism>
<name>RS12_DICT6</name>
<accession>B5YDT8</accession>
<evidence type="ECO:0000250" key="1"/>
<evidence type="ECO:0000255" key="2">
    <source>
        <dbReference type="HAMAP-Rule" id="MF_00403"/>
    </source>
</evidence>
<evidence type="ECO:0000256" key="3">
    <source>
        <dbReference type="SAM" id="MobiDB-lite"/>
    </source>
</evidence>
<evidence type="ECO:0000305" key="4"/>
<proteinExistence type="inferred from homology"/>
<feature type="chain" id="PRO_1000194157" description="Small ribosomal subunit protein uS12">
    <location>
        <begin position="1"/>
        <end position="128"/>
    </location>
</feature>
<feature type="region of interest" description="Disordered" evidence="3">
    <location>
        <begin position="1"/>
        <end position="30"/>
    </location>
</feature>
<feature type="region of interest" description="Disordered" evidence="3">
    <location>
        <begin position="106"/>
        <end position="128"/>
    </location>
</feature>
<feature type="modified residue" description="3-methylthioaspartic acid" evidence="1">
    <location>
        <position position="89"/>
    </location>
</feature>
<dbReference type="EMBL" id="CP001146">
    <property type="protein sequence ID" value="ACI20021.1"/>
    <property type="molecule type" value="Genomic_DNA"/>
</dbReference>
<dbReference type="RefSeq" id="WP_012548653.1">
    <property type="nucleotide sequence ID" value="NC_011297.1"/>
</dbReference>
<dbReference type="SMR" id="B5YDT8"/>
<dbReference type="STRING" id="309799.DICTH_0832"/>
<dbReference type="PaxDb" id="309799-DICTH_0832"/>
<dbReference type="KEGG" id="dth:DICTH_0832"/>
<dbReference type="eggNOG" id="COG0048">
    <property type="taxonomic scope" value="Bacteria"/>
</dbReference>
<dbReference type="HOGENOM" id="CLU_104295_1_2_0"/>
<dbReference type="OrthoDB" id="9802366at2"/>
<dbReference type="Proteomes" id="UP000001733">
    <property type="component" value="Chromosome"/>
</dbReference>
<dbReference type="GO" id="GO:0015935">
    <property type="term" value="C:small ribosomal subunit"/>
    <property type="evidence" value="ECO:0007669"/>
    <property type="project" value="InterPro"/>
</dbReference>
<dbReference type="GO" id="GO:0019843">
    <property type="term" value="F:rRNA binding"/>
    <property type="evidence" value="ECO:0007669"/>
    <property type="project" value="UniProtKB-UniRule"/>
</dbReference>
<dbReference type="GO" id="GO:0003735">
    <property type="term" value="F:structural constituent of ribosome"/>
    <property type="evidence" value="ECO:0007669"/>
    <property type="project" value="InterPro"/>
</dbReference>
<dbReference type="GO" id="GO:0000049">
    <property type="term" value="F:tRNA binding"/>
    <property type="evidence" value="ECO:0007669"/>
    <property type="project" value="UniProtKB-UniRule"/>
</dbReference>
<dbReference type="GO" id="GO:0006412">
    <property type="term" value="P:translation"/>
    <property type="evidence" value="ECO:0007669"/>
    <property type="project" value="UniProtKB-UniRule"/>
</dbReference>
<dbReference type="CDD" id="cd03368">
    <property type="entry name" value="Ribosomal_S12"/>
    <property type="match status" value="1"/>
</dbReference>
<dbReference type="FunFam" id="2.40.50.140:FF:000001">
    <property type="entry name" value="30S ribosomal protein S12"/>
    <property type="match status" value="1"/>
</dbReference>
<dbReference type="Gene3D" id="2.40.50.140">
    <property type="entry name" value="Nucleic acid-binding proteins"/>
    <property type="match status" value="1"/>
</dbReference>
<dbReference type="HAMAP" id="MF_00403_B">
    <property type="entry name" value="Ribosomal_uS12_B"/>
    <property type="match status" value="1"/>
</dbReference>
<dbReference type="InterPro" id="IPR012340">
    <property type="entry name" value="NA-bd_OB-fold"/>
</dbReference>
<dbReference type="InterPro" id="IPR006032">
    <property type="entry name" value="Ribosomal_uS12"/>
</dbReference>
<dbReference type="InterPro" id="IPR005679">
    <property type="entry name" value="Ribosomal_uS12_bac"/>
</dbReference>
<dbReference type="NCBIfam" id="TIGR00981">
    <property type="entry name" value="rpsL_bact"/>
    <property type="match status" value="1"/>
</dbReference>
<dbReference type="PANTHER" id="PTHR11652">
    <property type="entry name" value="30S RIBOSOMAL PROTEIN S12 FAMILY MEMBER"/>
    <property type="match status" value="1"/>
</dbReference>
<dbReference type="Pfam" id="PF00164">
    <property type="entry name" value="Ribosom_S12_S23"/>
    <property type="match status" value="1"/>
</dbReference>
<dbReference type="PIRSF" id="PIRSF002133">
    <property type="entry name" value="Ribosomal_S12/S23"/>
    <property type="match status" value="1"/>
</dbReference>
<dbReference type="PRINTS" id="PR01034">
    <property type="entry name" value="RIBOSOMALS12"/>
</dbReference>
<dbReference type="SUPFAM" id="SSF50249">
    <property type="entry name" value="Nucleic acid-binding proteins"/>
    <property type="match status" value="1"/>
</dbReference>
<dbReference type="PROSITE" id="PS00055">
    <property type="entry name" value="RIBOSOMAL_S12"/>
    <property type="match status" value="1"/>
</dbReference>
<protein>
    <recommendedName>
        <fullName evidence="2">Small ribosomal subunit protein uS12</fullName>
    </recommendedName>
    <alternativeName>
        <fullName evidence="4">30S ribosomal protein S12</fullName>
    </alternativeName>
</protein>